<sequence>MGGSGSRLSKELLAEYQDLTFLTKQEILLAHRRFCELLPQEQRSVESSLRAQVPFEQILSLPELKANPFKERICRVFSTSPAKDSLSFEDFLDLLSVFSDTATPDIKSHYAFRIFDFDDDGTLNREDLSRLVNCLTGEGEDTRLSASEMKQLIDNILEESDIDRDGTINLSEFQHVISRSPDFASSFKIVL</sequence>
<accession>Q99828</accession>
<accession>B5BU40</accession>
<accession>H6WJF3</accession>
<accession>O00693</accession>
<accession>O00735</accession>
<accession>Q6IB49</accession>
<accession>Q96J54</accession>
<accession>Q99971</accession>
<protein>
    <recommendedName>
        <fullName>Calcium and integrin-binding protein 1</fullName>
        <shortName>CIB</shortName>
    </recommendedName>
    <alternativeName>
        <fullName>Calcium- and integrin-binding protein</fullName>
        <shortName>CIBP</shortName>
    </alternativeName>
    <alternativeName>
        <fullName>Calmyrin</fullName>
    </alternativeName>
    <alternativeName>
        <fullName>DNA-PKcs-interacting protein</fullName>
    </alternativeName>
    <alternativeName>
        <fullName>Kinase-interacting protein</fullName>
        <shortName>KIP</shortName>
    </alternativeName>
    <alternativeName>
        <fullName>SNK-interacting protein 2-28</fullName>
        <shortName>SIP2-28</shortName>
    </alternativeName>
</protein>
<name>CIB1_HUMAN</name>
<dbReference type="EMBL" id="U82226">
    <property type="protein sequence ID" value="AAC51106.1"/>
    <property type="molecule type" value="mRNA"/>
</dbReference>
<dbReference type="EMBL" id="U85611">
    <property type="protein sequence ID" value="AAB53387.1"/>
    <property type="molecule type" value="mRNA"/>
</dbReference>
<dbReference type="EMBL" id="AB021866">
    <property type="protein sequence ID" value="BAA36281.1"/>
    <property type="molecule type" value="Genomic_DNA"/>
</dbReference>
<dbReference type="EMBL" id="JQ246073">
    <property type="protein sequence ID" value="AEZ06077.1"/>
    <property type="molecule type" value="mRNA"/>
</dbReference>
<dbReference type="EMBL" id="U83236">
    <property type="protein sequence ID" value="AAB39758.1"/>
    <property type="molecule type" value="mRNA"/>
</dbReference>
<dbReference type="EMBL" id="CR456955">
    <property type="protein sequence ID" value="CAG33236.1"/>
    <property type="molecule type" value="mRNA"/>
</dbReference>
<dbReference type="EMBL" id="AB451276">
    <property type="protein sequence ID" value="BAG70090.1"/>
    <property type="molecule type" value="mRNA"/>
</dbReference>
<dbReference type="EMBL" id="AB451406">
    <property type="protein sequence ID" value="BAG70220.1"/>
    <property type="molecule type" value="mRNA"/>
</dbReference>
<dbReference type="EMBL" id="CH471101">
    <property type="protein sequence ID" value="EAX02090.1"/>
    <property type="molecule type" value="Genomic_DNA"/>
</dbReference>
<dbReference type="EMBL" id="BC000846">
    <property type="protein sequence ID" value="AAH00846.1"/>
    <property type="molecule type" value="mRNA"/>
</dbReference>
<dbReference type="CCDS" id="CCDS10360.1">
    <molecule id="Q99828-1"/>
</dbReference>
<dbReference type="CCDS" id="CCDS73781.1">
    <molecule id="Q99828-2"/>
</dbReference>
<dbReference type="RefSeq" id="NP_001264693.1">
    <molecule id="Q99828-2"/>
    <property type="nucleotide sequence ID" value="NM_001277764.2"/>
</dbReference>
<dbReference type="RefSeq" id="NP_006375.2">
    <molecule id="Q99828-1"/>
    <property type="nucleotide sequence ID" value="NM_006384.4"/>
</dbReference>
<dbReference type="PDB" id="1DGU">
    <property type="method" value="NMR"/>
    <property type="chains" value="A=9-191"/>
</dbReference>
<dbReference type="PDB" id="1DGV">
    <property type="method" value="NMR"/>
    <property type="chains" value="A=9-191"/>
</dbReference>
<dbReference type="PDB" id="1XO5">
    <property type="method" value="X-ray"/>
    <property type="resolution" value="1.99 A"/>
    <property type="chains" value="A/B=9-191"/>
</dbReference>
<dbReference type="PDB" id="1Y1A">
    <property type="method" value="X-ray"/>
    <property type="resolution" value="2.30 A"/>
    <property type="chains" value="A/B=9-191"/>
</dbReference>
<dbReference type="PDB" id="2L4H">
    <property type="method" value="NMR"/>
    <property type="chains" value="A=1-191"/>
</dbReference>
<dbReference type="PDB" id="2L4I">
    <property type="method" value="NMR"/>
    <property type="chains" value="A=1-191"/>
</dbReference>
<dbReference type="PDB" id="2LM5">
    <property type="method" value="NMR"/>
    <property type="chains" value="A=1-191"/>
</dbReference>
<dbReference type="PDB" id="6OCX">
    <property type="method" value="X-ray"/>
    <property type="resolution" value="1.90 A"/>
    <property type="chains" value="A/B/C/D=1-191"/>
</dbReference>
<dbReference type="PDB" id="6OD0">
    <property type="method" value="X-ray"/>
    <property type="resolution" value="2.15 A"/>
    <property type="chains" value="A/B=1-191"/>
</dbReference>
<dbReference type="PDBsum" id="1DGU"/>
<dbReference type="PDBsum" id="1DGV"/>
<dbReference type="PDBsum" id="1XO5"/>
<dbReference type="PDBsum" id="1Y1A"/>
<dbReference type="PDBsum" id="2L4H"/>
<dbReference type="PDBsum" id="2L4I"/>
<dbReference type="PDBsum" id="2LM5"/>
<dbReference type="PDBsum" id="6OCX"/>
<dbReference type="PDBsum" id="6OD0"/>
<dbReference type="BMRB" id="Q99828"/>
<dbReference type="SMR" id="Q99828"/>
<dbReference type="BioGRID" id="115774">
    <property type="interactions" value="79"/>
</dbReference>
<dbReference type="CORUM" id="Q99828"/>
<dbReference type="DIP" id="DIP-31260N"/>
<dbReference type="FunCoup" id="Q99828">
    <property type="interactions" value="118"/>
</dbReference>
<dbReference type="IntAct" id="Q99828">
    <property type="interactions" value="68"/>
</dbReference>
<dbReference type="MINT" id="Q99828"/>
<dbReference type="STRING" id="9606.ENSP00000479860"/>
<dbReference type="BindingDB" id="Q99828"/>
<dbReference type="ChEMBL" id="CHEMBL4879503"/>
<dbReference type="DrugBank" id="DB11093">
    <property type="generic name" value="Calcium citrate"/>
</dbReference>
<dbReference type="DrugBank" id="DB11348">
    <property type="generic name" value="Calcium Phosphate"/>
</dbReference>
<dbReference type="DrugBank" id="DB14481">
    <property type="generic name" value="Calcium phosphate dihydrate"/>
</dbReference>
<dbReference type="TCDB" id="8.A.82.1.9">
    <property type="family name" value="the calmodulin calcium binding protein (calmodulin) family"/>
</dbReference>
<dbReference type="iPTMnet" id="Q99828"/>
<dbReference type="PhosphoSitePlus" id="Q99828"/>
<dbReference type="BioMuta" id="CIB1"/>
<dbReference type="DMDM" id="134047806"/>
<dbReference type="jPOST" id="Q99828"/>
<dbReference type="MassIVE" id="Q99828"/>
<dbReference type="PeptideAtlas" id="Q99828"/>
<dbReference type="ProteomicsDB" id="78493">
    <molecule id="Q99828-1"/>
</dbReference>
<dbReference type="Pumba" id="Q99828"/>
<dbReference type="Antibodypedia" id="28761">
    <property type="antibodies" value="395 antibodies from 35 providers"/>
</dbReference>
<dbReference type="DNASU" id="10519"/>
<dbReference type="Ensembl" id="ENST00000328649.11">
    <molecule id="Q99828-1"/>
    <property type="protein sequence ID" value="ENSP00000333873.6"/>
    <property type="gene ID" value="ENSG00000185043.13"/>
</dbReference>
<dbReference type="Ensembl" id="ENST00000612800.1">
    <molecule id="Q99828-2"/>
    <property type="protein sequence ID" value="ENSP00000479860.1"/>
    <property type="gene ID" value="ENSG00000185043.13"/>
</dbReference>
<dbReference type="GeneID" id="10519"/>
<dbReference type="KEGG" id="hsa:10519"/>
<dbReference type="MANE-Select" id="ENST00000328649.11">
    <property type="protein sequence ID" value="ENSP00000333873.6"/>
    <property type="RefSeq nucleotide sequence ID" value="NM_006384.4"/>
    <property type="RefSeq protein sequence ID" value="NP_006375.2"/>
</dbReference>
<dbReference type="UCSC" id="uc002bpb.5">
    <molecule id="Q99828-1"/>
    <property type="organism name" value="human"/>
</dbReference>
<dbReference type="AGR" id="HGNC:16920"/>
<dbReference type="CTD" id="10519"/>
<dbReference type="DisGeNET" id="10519"/>
<dbReference type="GeneCards" id="CIB1"/>
<dbReference type="HGNC" id="HGNC:16920">
    <property type="gene designation" value="CIB1"/>
</dbReference>
<dbReference type="HPA" id="ENSG00000185043">
    <property type="expression patterns" value="Low tissue specificity"/>
</dbReference>
<dbReference type="MalaCards" id="CIB1"/>
<dbReference type="MIM" id="602293">
    <property type="type" value="gene"/>
</dbReference>
<dbReference type="MIM" id="618267">
    <property type="type" value="phenotype"/>
</dbReference>
<dbReference type="neXtProt" id="NX_Q99828"/>
<dbReference type="OpenTargets" id="ENSG00000185043"/>
<dbReference type="Orphanet" id="302">
    <property type="disease" value="Inherited epidermodysplasia verruciformis"/>
</dbReference>
<dbReference type="PharmGKB" id="PA38423"/>
<dbReference type="VEuPathDB" id="HostDB:ENSG00000185043"/>
<dbReference type="GeneTree" id="ENSGT00940000158927"/>
<dbReference type="HOGENOM" id="CLU_061288_6_1_1"/>
<dbReference type="InParanoid" id="Q99828"/>
<dbReference type="OMA" id="HAHQKFK"/>
<dbReference type="OrthoDB" id="114727at2759"/>
<dbReference type="PAN-GO" id="Q99828">
    <property type="GO annotations" value="11 GO annotations based on evolutionary models"/>
</dbReference>
<dbReference type="PhylomeDB" id="Q99828"/>
<dbReference type="TreeFam" id="TF313865"/>
<dbReference type="PathwayCommons" id="Q99828"/>
<dbReference type="SignaLink" id="Q99828"/>
<dbReference type="SIGNOR" id="Q99828"/>
<dbReference type="BioGRID-ORCS" id="10519">
    <property type="hits" value="17 hits in 1165 CRISPR screens"/>
</dbReference>
<dbReference type="CD-CODE" id="8C2F96ED">
    <property type="entry name" value="Centrosome"/>
</dbReference>
<dbReference type="ChiTaRS" id="CIB1">
    <property type="organism name" value="human"/>
</dbReference>
<dbReference type="EvolutionaryTrace" id="Q99828"/>
<dbReference type="GeneWiki" id="CIB1"/>
<dbReference type="GenomeRNAi" id="10519"/>
<dbReference type="Pharos" id="Q99828">
    <property type="development level" value="Tchem"/>
</dbReference>
<dbReference type="PRO" id="PR:Q99828"/>
<dbReference type="Proteomes" id="UP000005640">
    <property type="component" value="Chromosome 15"/>
</dbReference>
<dbReference type="RNAct" id="Q99828">
    <property type="molecule type" value="protein"/>
</dbReference>
<dbReference type="Bgee" id="ENSG00000185043">
    <property type="expression patterns" value="Expressed in bronchial epithelial cell and 196 other cell types or tissues"/>
</dbReference>
<dbReference type="ExpressionAtlas" id="Q99828">
    <property type="expression patterns" value="baseline and differential"/>
</dbReference>
<dbReference type="GO" id="GO:0016324">
    <property type="term" value="C:apical plasma membrane"/>
    <property type="evidence" value="ECO:0007669"/>
    <property type="project" value="UniProtKB-SubCell"/>
</dbReference>
<dbReference type="GO" id="GO:0030424">
    <property type="term" value="C:axon"/>
    <property type="evidence" value="ECO:0000318"/>
    <property type="project" value="GO_Central"/>
</dbReference>
<dbReference type="GO" id="GO:0071944">
    <property type="term" value="C:cell periphery"/>
    <property type="evidence" value="ECO:0000314"/>
    <property type="project" value="UniProtKB"/>
</dbReference>
<dbReference type="GO" id="GO:0005813">
    <property type="term" value="C:centrosome"/>
    <property type="evidence" value="ECO:0000314"/>
    <property type="project" value="UniProtKB"/>
</dbReference>
<dbReference type="GO" id="GO:0005737">
    <property type="term" value="C:cytoplasm"/>
    <property type="evidence" value="ECO:0000314"/>
    <property type="project" value="UniProtKB"/>
</dbReference>
<dbReference type="GO" id="GO:0005783">
    <property type="term" value="C:endoplasmic reticulum"/>
    <property type="evidence" value="ECO:0000315"/>
    <property type="project" value="HGNC-UCL"/>
</dbReference>
<dbReference type="GO" id="GO:0070062">
    <property type="term" value="C:extracellular exosome"/>
    <property type="evidence" value="ECO:0007005"/>
    <property type="project" value="UniProtKB"/>
</dbReference>
<dbReference type="GO" id="GO:0032433">
    <property type="term" value="C:filopodium tip"/>
    <property type="evidence" value="ECO:0000314"/>
    <property type="project" value="UniProtKB"/>
</dbReference>
<dbReference type="GO" id="GO:0005794">
    <property type="term" value="C:Golgi apparatus"/>
    <property type="evidence" value="ECO:0007669"/>
    <property type="project" value="UniProtKB-SubCell"/>
</dbReference>
<dbReference type="GO" id="GO:0030426">
    <property type="term" value="C:growth cone"/>
    <property type="evidence" value="ECO:0000314"/>
    <property type="project" value="UniProtKB"/>
</dbReference>
<dbReference type="GO" id="GO:0030027">
    <property type="term" value="C:lamellipodium"/>
    <property type="evidence" value="ECO:0000314"/>
    <property type="project" value="UniProtKB"/>
</dbReference>
<dbReference type="GO" id="GO:0016020">
    <property type="term" value="C:membrane"/>
    <property type="evidence" value="ECO:0000314"/>
    <property type="project" value="HGNC-UCL"/>
</dbReference>
<dbReference type="GO" id="GO:0043005">
    <property type="term" value="C:neuron projection"/>
    <property type="evidence" value="ECO:0000314"/>
    <property type="project" value="UniProtKB"/>
</dbReference>
<dbReference type="GO" id="GO:0043025">
    <property type="term" value="C:neuronal cell body"/>
    <property type="evidence" value="ECO:0000314"/>
    <property type="project" value="UniProtKB"/>
</dbReference>
<dbReference type="GO" id="GO:0016604">
    <property type="term" value="C:nuclear body"/>
    <property type="evidence" value="ECO:0000314"/>
    <property type="project" value="HPA"/>
</dbReference>
<dbReference type="GO" id="GO:0005654">
    <property type="term" value="C:nucleoplasm"/>
    <property type="evidence" value="ECO:0000314"/>
    <property type="project" value="HPA"/>
</dbReference>
<dbReference type="GO" id="GO:0005634">
    <property type="term" value="C:nucleus"/>
    <property type="evidence" value="ECO:0000314"/>
    <property type="project" value="UniProtKB"/>
</dbReference>
<dbReference type="GO" id="GO:0043204">
    <property type="term" value="C:perikaryon"/>
    <property type="evidence" value="ECO:0007669"/>
    <property type="project" value="UniProtKB-SubCell"/>
</dbReference>
<dbReference type="GO" id="GO:0048471">
    <property type="term" value="C:perinuclear region of cytoplasm"/>
    <property type="evidence" value="ECO:0000314"/>
    <property type="project" value="UniProtKB"/>
</dbReference>
<dbReference type="GO" id="GO:0005886">
    <property type="term" value="C:plasma membrane"/>
    <property type="evidence" value="ECO:0000314"/>
    <property type="project" value="HPA"/>
</dbReference>
<dbReference type="GO" id="GO:0032587">
    <property type="term" value="C:ruffle membrane"/>
    <property type="evidence" value="ECO:0007669"/>
    <property type="project" value="UniProtKB-SubCell"/>
</dbReference>
<dbReference type="GO" id="GO:0042383">
    <property type="term" value="C:sarcolemma"/>
    <property type="evidence" value="ECO:0000314"/>
    <property type="project" value="BHF-UCL"/>
</dbReference>
<dbReference type="GO" id="GO:0031982">
    <property type="term" value="C:vesicle"/>
    <property type="evidence" value="ECO:0007005"/>
    <property type="project" value="UniProtKB"/>
</dbReference>
<dbReference type="GO" id="GO:0005509">
    <property type="term" value="F:calcium ion binding"/>
    <property type="evidence" value="ECO:0000315"/>
    <property type="project" value="HGNC-UCL"/>
</dbReference>
<dbReference type="GO" id="GO:0008427">
    <property type="term" value="F:calcium-dependent protein kinase inhibitor activity"/>
    <property type="evidence" value="ECO:0000315"/>
    <property type="project" value="CACAO"/>
</dbReference>
<dbReference type="GO" id="GO:0000287">
    <property type="term" value="F:magnesium ion binding"/>
    <property type="evidence" value="ECO:0000318"/>
    <property type="project" value="GO_Central"/>
</dbReference>
<dbReference type="GO" id="GO:0030291">
    <property type="term" value="F:protein serine/threonine kinase inhibitor activity"/>
    <property type="evidence" value="ECO:0000314"/>
    <property type="project" value="CACAO"/>
</dbReference>
<dbReference type="GO" id="GO:0043495">
    <property type="term" value="F:protein-membrane adaptor activity"/>
    <property type="evidence" value="ECO:0000316"/>
    <property type="project" value="BHF-UCL"/>
</dbReference>
<dbReference type="GO" id="GO:0031267">
    <property type="term" value="F:small GTPase binding"/>
    <property type="evidence" value="ECO:0000353"/>
    <property type="project" value="UniProtKB"/>
</dbReference>
<dbReference type="GO" id="GO:0044325">
    <property type="term" value="F:transmembrane transporter binding"/>
    <property type="evidence" value="ECO:0007669"/>
    <property type="project" value="Ensembl"/>
</dbReference>
<dbReference type="GO" id="GO:0001525">
    <property type="term" value="P:angiogenesis"/>
    <property type="evidence" value="ECO:0007669"/>
    <property type="project" value="UniProtKB-KW"/>
</dbReference>
<dbReference type="GO" id="GO:0006915">
    <property type="term" value="P:apoptotic process"/>
    <property type="evidence" value="ECO:0000315"/>
    <property type="project" value="HGNC-UCL"/>
</dbReference>
<dbReference type="GO" id="GO:0007155">
    <property type="term" value="P:cell adhesion"/>
    <property type="evidence" value="ECO:0000304"/>
    <property type="project" value="ProtInc"/>
</dbReference>
<dbReference type="GO" id="GO:0051301">
    <property type="term" value="P:cell division"/>
    <property type="evidence" value="ECO:0007669"/>
    <property type="project" value="UniProtKB-KW"/>
</dbReference>
<dbReference type="GO" id="GO:0071363">
    <property type="term" value="P:cellular response to growth factor stimulus"/>
    <property type="evidence" value="ECO:0000250"/>
    <property type="project" value="UniProtKB"/>
</dbReference>
<dbReference type="GO" id="GO:1990090">
    <property type="term" value="P:cellular response to nerve growth factor stimulus"/>
    <property type="evidence" value="ECO:0000314"/>
    <property type="project" value="UniProtKB"/>
</dbReference>
<dbReference type="GO" id="GO:0071356">
    <property type="term" value="P:cellular response to tumor necrosis factor"/>
    <property type="evidence" value="ECO:0000315"/>
    <property type="project" value="UniProtKB"/>
</dbReference>
<dbReference type="GO" id="GO:0031122">
    <property type="term" value="P:cytoplasmic microtubule organization"/>
    <property type="evidence" value="ECO:0000315"/>
    <property type="project" value="UniProtKB"/>
</dbReference>
<dbReference type="GO" id="GO:0006974">
    <property type="term" value="P:DNA damage response"/>
    <property type="evidence" value="ECO:0000314"/>
    <property type="project" value="HGNC-UCL"/>
</dbReference>
<dbReference type="GO" id="GO:0006302">
    <property type="term" value="P:double-strand break repair"/>
    <property type="evidence" value="ECO:0000304"/>
    <property type="project" value="ProtInc"/>
</dbReference>
<dbReference type="GO" id="GO:0007113">
    <property type="term" value="P:endomitotic cell cycle"/>
    <property type="evidence" value="ECO:0000314"/>
    <property type="project" value="UniProtKB"/>
</dbReference>
<dbReference type="GO" id="GO:0097191">
    <property type="term" value="P:extrinsic apoptotic signaling pathway"/>
    <property type="evidence" value="ECO:0000304"/>
    <property type="project" value="BHF-UCL"/>
</dbReference>
<dbReference type="GO" id="GO:0043066">
    <property type="term" value="P:negative regulation of apoptotic process"/>
    <property type="evidence" value="ECO:0000315"/>
    <property type="project" value="UniProtKB"/>
</dbReference>
<dbReference type="GO" id="GO:0008285">
    <property type="term" value="P:negative regulation of cell population proliferation"/>
    <property type="evidence" value="ECO:0000315"/>
    <property type="project" value="UniProtKB"/>
</dbReference>
<dbReference type="GO" id="GO:0045653">
    <property type="term" value="P:negative regulation of megakaryocyte differentiation"/>
    <property type="evidence" value="ECO:0000250"/>
    <property type="project" value="UniProtKB"/>
</dbReference>
<dbReference type="GO" id="GO:0007026">
    <property type="term" value="P:negative regulation of microtubule depolymerization"/>
    <property type="evidence" value="ECO:0000314"/>
    <property type="project" value="UniProtKB"/>
</dbReference>
<dbReference type="GO" id="GO:0010977">
    <property type="term" value="P:negative regulation of neuron projection development"/>
    <property type="evidence" value="ECO:0000314"/>
    <property type="project" value="UniProtKB"/>
</dbReference>
<dbReference type="GO" id="GO:0051898">
    <property type="term" value="P:negative regulation of phosphatidylinositol 3-kinase/protein kinase B signal transduction"/>
    <property type="evidence" value="ECO:0000250"/>
    <property type="project" value="UniProtKB"/>
</dbReference>
<dbReference type="GO" id="GO:0001933">
    <property type="term" value="P:negative regulation of protein phosphorylation"/>
    <property type="evidence" value="ECO:0000250"/>
    <property type="project" value="UniProtKB"/>
</dbReference>
<dbReference type="GO" id="GO:0030220">
    <property type="term" value="P:platelet formation"/>
    <property type="evidence" value="ECO:0000250"/>
    <property type="project" value="UniProtKB"/>
</dbReference>
<dbReference type="GO" id="GO:0070886">
    <property type="term" value="P:positive regulation of calcineurin-NFAT signaling cascade"/>
    <property type="evidence" value="ECO:0000314"/>
    <property type="project" value="BHF-UCL"/>
</dbReference>
<dbReference type="GO" id="GO:0043085">
    <property type="term" value="P:positive regulation of catalytic activity"/>
    <property type="evidence" value="ECO:0000250"/>
    <property type="project" value="UniProtKB"/>
</dbReference>
<dbReference type="GO" id="GO:0033630">
    <property type="term" value="P:positive regulation of cell adhesion mediated by integrin"/>
    <property type="evidence" value="ECO:0000314"/>
    <property type="project" value="UniProtKB"/>
</dbReference>
<dbReference type="GO" id="GO:0030307">
    <property type="term" value="P:positive regulation of cell growth"/>
    <property type="evidence" value="ECO:0000250"/>
    <property type="project" value="UniProtKB"/>
</dbReference>
<dbReference type="GO" id="GO:0030335">
    <property type="term" value="P:positive regulation of cell migration"/>
    <property type="evidence" value="ECO:0000250"/>
    <property type="project" value="UniProtKB"/>
</dbReference>
<dbReference type="GO" id="GO:0090050">
    <property type="term" value="P:positive regulation of cell migration involved in sprouting angiogenesis"/>
    <property type="evidence" value="ECO:0000250"/>
    <property type="project" value="UniProtKB"/>
</dbReference>
<dbReference type="GO" id="GO:0008284">
    <property type="term" value="P:positive regulation of cell population proliferation"/>
    <property type="evidence" value="ECO:0000250"/>
    <property type="project" value="UniProtKB"/>
</dbReference>
<dbReference type="GO" id="GO:0001954">
    <property type="term" value="P:positive regulation of cell-matrix adhesion"/>
    <property type="evidence" value="ECO:0000250"/>
    <property type="project" value="UniProtKB"/>
</dbReference>
<dbReference type="GO" id="GO:0070374">
    <property type="term" value="P:positive regulation of ERK1 and ERK2 cascade"/>
    <property type="evidence" value="ECO:0000250"/>
    <property type="project" value="UniProtKB"/>
</dbReference>
<dbReference type="GO" id="GO:2000256">
    <property type="term" value="P:positive regulation of male germ cell proliferation"/>
    <property type="evidence" value="ECO:0000250"/>
    <property type="project" value="UniProtKB"/>
</dbReference>
<dbReference type="GO" id="GO:0051092">
    <property type="term" value="P:positive regulation of NF-kappaB transcription factor activity"/>
    <property type="evidence" value="ECO:0000315"/>
    <property type="project" value="UniProtKB"/>
</dbReference>
<dbReference type="GO" id="GO:1903078">
    <property type="term" value="P:positive regulation of protein localization to plasma membrane"/>
    <property type="evidence" value="ECO:0000316"/>
    <property type="project" value="BHF-UCL"/>
</dbReference>
<dbReference type="GO" id="GO:0001934">
    <property type="term" value="P:positive regulation of protein phosphorylation"/>
    <property type="evidence" value="ECO:0000250"/>
    <property type="project" value="UniProtKB"/>
</dbReference>
<dbReference type="GO" id="GO:0071902">
    <property type="term" value="P:positive regulation of protein serine/threonine kinase activity"/>
    <property type="evidence" value="ECO:0000250"/>
    <property type="project" value="UniProtKB"/>
</dbReference>
<dbReference type="GO" id="GO:0090314">
    <property type="term" value="P:positive regulation of protein targeting to membrane"/>
    <property type="evidence" value="ECO:0000315"/>
    <property type="project" value="UniProtKB"/>
</dbReference>
<dbReference type="GO" id="GO:1900026">
    <property type="term" value="P:positive regulation of substrate adhesion-dependent cell spreading"/>
    <property type="evidence" value="ECO:0000314"/>
    <property type="project" value="UniProtKB"/>
</dbReference>
<dbReference type="GO" id="GO:0051302">
    <property type="term" value="P:regulation of cell division"/>
    <property type="evidence" value="ECO:0000315"/>
    <property type="project" value="UniProtKB"/>
</dbReference>
<dbReference type="GO" id="GO:0042127">
    <property type="term" value="P:regulation of cell population proliferation"/>
    <property type="evidence" value="ECO:0000315"/>
    <property type="project" value="UniProtKB"/>
</dbReference>
<dbReference type="GO" id="GO:0002931">
    <property type="term" value="P:response to ischemia"/>
    <property type="evidence" value="ECO:0000250"/>
    <property type="project" value="UniProtKB"/>
</dbReference>
<dbReference type="GO" id="GO:0007286">
    <property type="term" value="P:spermatid development"/>
    <property type="evidence" value="ECO:0000250"/>
    <property type="project" value="UniProtKB"/>
</dbReference>
<dbReference type="GO" id="GO:0038163">
    <property type="term" value="P:thrombopoietin-mediated signaling pathway"/>
    <property type="evidence" value="ECO:0000250"/>
    <property type="project" value="UniProtKB"/>
</dbReference>
<dbReference type="CDD" id="cd00051">
    <property type="entry name" value="EFh"/>
    <property type="match status" value="1"/>
</dbReference>
<dbReference type="FunFam" id="1.10.238.10:FF:000079">
    <property type="entry name" value="Calcium and integrin-binding family member 2"/>
    <property type="match status" value="1"/>
</dbReference>
<dbReference type="Gene3D" id="1.10.238.10">
    <property type="entry name" value="EF-hand"/>
    <property type="match status" value="2"/>
</dbReference>
<dbReference type="InterPro" id="IPR051433">
    <property type="entry name" value="CIBP"/>
</dbReference>
<dbReference type="InterPro" id="IPR011992">
    <property type="entry name" value="EF-hand-dom_pair"/>
</dbReference>
<dbReference type="InterPro" id="IPR018247">
    <property type="entry name" value="EF_Hand_1_Ca_BS"/>
</dbReference>
<dbReference type="InterPro" id="IPR002048">
    <property type="entry name" value="EF_hand_dom"/>
</dbReference>
<dbReference type="PANTHER" id="PTHR45791">
    <property type="entry name" value="CALCIUM AND INTEGRIN BINDING FAMILY MEMBER 2"/>
    <property type="match status" value="1"/>
</dbReference>
<dbReference type="PANTHER" id="PTHR45791:SF3">
    <property type="entry name" value="CALCIUM AND INTEGRIN-BINDING PROTEIN 1"/>
    <property type="match status" value="1"/>
</dbReference>
<dbReference type="Pfam" id="PF13499">
    <property type="entry name" value="EF-hand_7"/>
    <property type="match status" value="1"/>
</dbReference>
<dbReference type="SMART" id="SM00054">
    <property type="entry name" value="EFh"/>
    <property type="match status" value="2"/>
</dbReference>
<dbReference type="SUPFAM" id="SSF47473">
    <property type="entry name" value="EF-hand"/>
    <property type="match status" value="1"/>
</dbReference>
<dbReference type="PROSITE" id="PS00018">
    <property type="entry name" value="EF_HAND_1"/>
    <property type="match status" value="2"/>
</dbReference>
<dbReference type="PROSITE" id="PS50222">
    <property type="entry name" value="EF_HAND_2"/>
    <property type="match status" value="2"/>
</dbReference>
<proteinExistence type="evidence at protein level"/>
<reference key="1">
    <citation type="journal article" date="1997" name="J. Biol. Chem.">
        <title>Identification of a novel calcium-binding protein that interacts with the integrin alphaIIb cytoplasmic domain.</title>
        <authorList>
            <person name="Naik U.P."/>
            <person name="Patel P.M."/>
            <person name="Parise L.V."/>
        </authorList>
    </citation>
    <scope>NUCLEOTIDE SEQUENCE [MRNA] (ISOFORM 1)</scope>
    <scope>INTERACTION WITH ITGA2B</scope>
    <scope>TISSUE SPECIFICITY</scope>
    <scope>CALCIUM-BINDING</scope>
    <source>
        <tissue>Fetal liver</tissue>
    </source>
</reference>
<reference key="2">
    <citation type="journal article" date="1997" name="Mutat. Res.">
        <title>Interaction between DNA-dependent protein kinase and a novel protein, KIP.</title>
        <authorList>
            <person name="Wu X."/>
            <person name="Lieber M.R."/>
        </authorList>
    </citation>
    <scope>NUCLEOTIDE SEQUENCE [MRNA] (ISOFORM 1)</scope>
    <scope>INTERACTION WITH PRKDC</scope>
    <scope>TISSUE SPECIFICITY</scope>
    <scope>VARIANT THR-44</scope>
</reference>
<reference key="3">
    <citation type="journal article" date="2000" name="DNA Seq.">
        <title>Genomic structure of mouse and human genes for DNA-PKcs interacting protein (KIP).</title>
        <authorList>
            <person name="Hattori A."/>
            <person name="Seki N."/>
            <person name="Hayashi A."/>
            <person name="Kozuma S."/>
            <person name="Saito T."/>
        </authorList>
    </citation>
    <scope>NUCLEOTIDE SEQUENCE [GENOMIC DNA]</scope>
    <scope>VARIANT THR-44</scope>
</reference>
<reference key="4">
    <citation type="journal article" date="2014" name="Oncogene">
        <title>A novel splice variant of calcium and integrin-binding protein 1 mediates protein kinase D2-stimulated tumour growth by regulating angiogenesis.</title>
        <authorList>
            <person name="Armacki M."/>
            <person name="Joodi G."/>
            <person name="Nimmagadda S.C."/>
            <person name="de Kimpe L."/>
            <person name="Pusapati G.V."/>
            <person name="Vandoninck S."/>
            <person name="Van Lint J."/>
            <person name="Illing A."/>
            <person name="Seufferlein T."/>
        </authorList>
    </citation>
    <scope>NUCLEOTIDE SEQUENCE [MRNA] (ISOFORM 2)</scope>
    <scope>FUNCTION (ISOFORM 2)</scope>
    <scope>INTERACTION WITH PRKD2; PTK2 AND PAK1</scope>
    <scope>SUBCELLULAR LOCATION (ISOFORM 2)</scope>
    <scope>TISSUE SPECIFICITY</scope>
    <scope>PHOSPHORYLATION AT SER-118 (ISOFORM 2)</scope>
    <scope>MUTAGENESIS OF SER-78 AND THR-167</scope>
    <source>
        <tissue>Brain</tissue>
    </source>
</reference>
<reference key="5">
    <citation type="submission" date="1997-01" db="EMBL/GenBank/DDBJ databases">
        <title>SNK, a Ser/Thr protein kinase, associated proteins.</title>
        <authorList>
            <person name="Yuan O."/>
        </authorList>
    </citation>
    <scope>NUCLEOTIDE SEQUENCE [MRNA] (ISOFORM 1)</scope>
    <scope>VARIANT THR-44</scope>
</reference>
<reference key="6">
    <citation type="submission" date="2004-06" db="EMBL/GenBank/DDBJ databases">
        <title>Cloning of human full open reading frames in Gateway(TM) system entry vector (pDONR201).</title>
        <authorList>
            <person name="Ebert L."/>
            <person name="Schick M."/>
            <person name="Neubert P."/>
            <person name="Schatten R."/>
            <person name="Henze S."/>
            <person name="Korn B."/>
        </authorList>
    </citation>
    <scope>NUCLEOTIDE SEQUENCE [LARGE SCALE MRNA] (ISOFORM 1)</scope>
</reference>
<reference key="7">
    <citation type="journal article" date="2008" name="Nat. Methods">
        <title>Human protein factory for converting the transcriptome into an in vitro-expressed proteome.</title>
        <authorList>
            <person name="Goshima N."/>
            <person name="Kawamura Y."/>
            <person name="Fukumoto A."/>
            <person name="Miura A."/>
            <person name="Honma R."/>
            <person name="Satoh R."/>
            <person name="Wakamatsu A."/>
            <person name="Yamamoto J."/>
            <person name="Kimura K."/>
            <person name="Nishikawa T."/>
            <person name="Andoh T."/>
            <person name="Iida Y."/>
            <person name="Ishikawa K."/>
            <person name="Ito E."/>
            <person name="Kagawa N."/>
            <person name="Kaminaga C."/>
            <person name="Kanehori K."/>
            <person name="Kawakami B."/>
            <person name="Kenmochi K."/>
            <person name="Kimura R."/>
            <person name="Kobayashi M."/>
            <person name="Kuroita T."/>
            <person name="Kuwayama H."/>
            <person name="Maruyama Y."/>
            <person name="Matsuo K."/>
            <person name="Minami K."/>
            <person name="Mitsubori M."/>
            <person name="Mori M."/>
            <person name="Morishita R."/>
            <person name="Murase A."/>
            <person name="Nishikawa A."/>
            <person name="Nishikawa S."/>
            <person name="Okamoto T."/>
            <person name="Sakagami N."/>
            <person name="Sakamoto Y."/>
            <person name="Sasaki Y."/>
            <person name="Seki T."/>
            <person name="Sono S."/>
            <person name="Sugiyama A."/>
            <person name="Sumiya T."/>
            <person name="Takayama T."/>
            <person name="Takayama Y."/>
            <person name="Takeda H."/>
            <person name="Togashi T."/>
            <person name="Yahata K."/>
            <person name="Yamada H."/>
            <person name="Yanagisawa Y."/>
            <person name="Endo Y."/>
            <person name="Imamoto F."/>
            <person name="Kisu Y."/>
            <person name="Tanaka S."/>
            <person name="Isogai T."/>
            <person name="Imai J."/>
            <person name="Watanabe S."/>
            <person name="Nomura N."/>
        </authorList>
    </citation>
    <scope>NUCLEOTIDE SEQUENCE [LARGE SCALE MRNA] (ISOFORM 1)</scope>
</reference>
<reference key="8">
    <citation type="submission" date="2005-07" db="EMBL/GenBank/DDBJ databases">
        <authorList>
            <person name="Mural R.J."/>
            <person name="Istrail S."/>
            <person name="Sutton G.G."/>
            <person name="Florea L."/>
            <person name="Halpern A.L."/>
            <person name="Mobarry C.M."/>
            <person name="Lippert R."/>
            <person name="Walenz B."/>
            <person name="Shatkay H."/>
            <person name="Dew I."/>
            <person name="Miller J.R."/>
            <person name="Flanigan M.J."/>
            <person name="Edwards N.J."/>
            <person name="Bolanos R."/>
            <person name="Fasulo D."/>
            <person name="Halldorsson B.V."/>
            <person name="Hannenhalli S."/>
            <person name="Turner R."/>
            <person name="Yooseph S."/>
            <person name="Lu F."/>
            <person name="Nusskern D.R."/>
            <person name="Shue B.C."/>
            <person name="Zheng X.H."/>
            <person name="Zhong F."/>
            <person name="Delcher A.L."/>
            <person name="Huson D.H."/>
            <person name="Kravitz S.A."/>
            <person name="Mouchard L."/>
            <person name="Reinert K."/>
            <person name="Remington K.A."/>
            <person name="Clark A.G."/>
            <person name="Waterman M.S."/>
            <person name="Eichler E.E."/>
            <person name="Adams M.D."/>
            <person name="Hunkapiller M.W."/>
            <person name="Myers E.W."/>
            <person name="Venter J.C."/>
        </authorList>
    </citation>
    <scope>NUCLEOTIDE SEQUENCE [LARGE SCALE GENOMIC DNA]</scope>
</reference>
<reference key="9">
    <citation type="journal article" date="2004" name="Genome Res.">
        <title>The status, quality, and expansion of the NIH full-length cDNA project: the Mammalian Gene Collection (MGC).</title>
        <authorList>
            <consortium name="The MGC Project Team"/>
        </authorList>
    </citation>
    <scope>NUCLEOTIDE SEQUENCE [LARGE SCALE MRNA] (ISOFORM 1)</scope>
    <source>
        <tissue>Cervix</tissue>
    </source>
</reference>
<reference key="10">
    <citation type="journal article" date="1999" name="Biochem. J.">
        <title>Calcium-dependent properties of CIB binding to the integrin alphaIIb cytoplasmic domain and translocation to the platelet cytoskeleton.</title>
        <authorList>
            <person name="Shock D.D."/>
            <person name="Naik U.P."/>
            <person name="Brittain J.E."/>
            <person name="Alahari S.K."/>
            <person name="Sondek J."/>
            <person name="Parise L.V."/>
        </authorList>
    </citation>
    <scope>INTERACTION WITH ITGA2B</scope>
    <scope>SUBCELLULAR LOCATION</scope>
    <scope>TISSUE SPECIFICITY</scope>
</reference>
<reference key="11">
    <citation type="journal article" date="1999" name="J. Cell Biol.">
        <title>A myristoylated calcium-binding protein that preferentially interacts with the Alzheimer's disease presenilin 2 protein.</title>
        <authorList>
            <person name="Stabler S.M."/>
            <person name="Ostrowski L.L."/>
            <person name="Janicki S.M."/>
            <person name="Monteiro M.J."/>
        </authorList>
    </citation>
    <scope>MYRISTOYLATION AT GLY-2</scope>
    <scope>INTERACTION WITH PSEN2</scope>
</reference>
<reference key="12">
    <citation type="journal article" date="2001" name="Thromb. Res.">
        <title>The interaction of the calcium- and integrin-binding protein (CIBP) with the coagulation factor VIII.</title>
        <authorList>
            <person name="Fang X."/>
            <person name="Chen C."/>
            <person name="Wang Q."/>
            <person name="Gu J."/>
            <person name="Chi C."/>
        </authorList>
    </citation>
    <scope>INTERACTION WITH F8</scope>
</reference>
<reference key="13">
    <citation type="journal article" date="2002" name="Eur. J. Biochem.">
        <title>NBR1 interacts with fasciculation and elongation protein zeta-1 (FEZ1) and calcium and integrin binding protein (CIB) and shows developmentally restricted expression in the neural tube.</title>
        <authorList>
            <person name="Whitehouse C."/>
            <person name="Chambers J."/>
            <person name="Howe K."/>
            <person name="Cobourne M."/>
            <person name="Sharpe P."/>
            <person name="Solomon E."/>
        </authorList>
    </citation>
    <scope>INTERACTION WITH NBR1 AND FEZ1</scope>
    <scope>SUBCELLULAR LOCATION</scope>
    <scope>TISSUE SPECIFICITY</scope>
</reference>
<reference key="14">
    <citation type="journal article" date="2002" name="J. Biol. Chem.">
        <title>The small GTPase Rac3 interacts with the integrin-binding protein CIB and promotes integrin alpha(IIb)beta(3)-mediated adhesion and spreading.</title>
        <authorList>
            <person name="Haataja L."/>
            <person name="Kaartinen V."/>
            <person name="Groffen J."/>
            <person name="Heisterkamp N."/>
        </authorList>
    </citation>
    <scope>FUNCTION</scope>
    <scope>INTERACTION WITH RAC3</scope>
    <scope>SUBCELLULAR LOCATION</scope>
</reference>
<reference key="15">
    <citation type="journal article" date="2002" name="J. Biol. Chem.">
        <title>EDD, the human hyperplastic discs protein, has a role in progesterone receptor coactivation and potential involvement in DNA damage response.</title>
        <authorList>
            <person name="Henderson M.J."/>
            <person name="Russell A.J."/>
            <person name="Hird S."/>
            <person name="Munoz M."/>
            <person name="Clancy J.L."/>
            <person name="Lehrbach G.M."/>
            <person name="Calanni S.T."/>
            <person name="Jans D.A."/>
            <person name="Sutherland R.L."/>
            <person name="Watts C.K."/>
        </authorList>
    </citation>
    <scope>INTERACTION WITH UBR5</scope>
</reference>
<reference key="16">
    <citation type="journal article" date="2002" name="J. Biol. Chem.">
        <title>Molecular basis of CIB binding to the integrin alpha IIb cytoplasmic domain.</title>
        <authorList>
            <person name="Barry W.T."/>
            <person name="Boudignon-Proudhon C."/>
            <person name="Shock D.D."/>
            <person name="McFadden A."/>
            <person name="Weiss J.M."/>
            <person name="Sondek J."/>
            <person name="Parise L.V."/>
        </authorList>
    </citation>
    <scope>INTERACTION WITH ITGA2B</scope>
    <scope>SUBCELLULAR LOCATION</scope>
    <scope>MUTAGENESIS OF PHE-115; LEU-131; ILE-153 AND PHE-173</scope>
</reference>
<reference key="17">
    <citation type="journal article" date="2003" name="Blood">
        <title>Association of CIB with GPIIb/IIIa during outside-in signaling is required for platelet spreading on fibrinogen.</title>
        <authorList>
            <person name="Naik U.P."/>
            <person name="Naik M.U."/>
        </authorList>
    </citation>
    <scope>FUNCTION</scope>
</reference>
<reference key="18">
    <citation type="journal article" date="2004" name="Biochemistry">
        <title>Metal ion binding properties and conformational states of calcium- and integrin-binding protein.</title>
        <authorList>
            <person name="Yamniuk A.P."/>
            <person name="Nguyen L.T."/>
            <person name="Hoang T.T."/>
            <person name="Vogel H.J."/>
        </authorList>
    </citation>
    <scope>INTERACTION WITH ITGA2B</scope>
    <scope>CALCIUM-BINDING</scope>
    <scope>MAGNESIUM-BINDING</scope>
</reference>
<reference key="19">
    <citation type="journal article" date="2004" name="Exp. Cell Res.">
        <title>Calcium binding sequences in calmyrin regulates interaction with presenilin-2.</title>
        <authorList>
            <person name="Zhu J."/>
            <person name="Stabler S.M."/>
            <person name="Ames J.B."/>
            <person name="Baskakov I."/>
            <person name="Monteiro M.J."/>
        </authorList>
    </citation>
    <scope>SUBCELLULAR LOCATION</scope>
    <scope>INTERACTION WITH PSEN2</scope>
    <scope>MUTAGENESIS OF ASP-127 AND GLU-172</scope>
</reference>
<reference key="20">
    <citation type="journal article" date="2003" name="Blood">
        <title>Calcium-and integrin-binding protein regulates focal adhesion kinase activity during platelet spreading on immobilized fibrinogen.</title>
        <authorList>
            <person name="Naik M.U."/>
            <person name="Naik U.P."/>
        </authorList>
    </citation>
    <scope>FUNCTION</scope>
    <scope>SUBCELLULAR LOCATION</scope>
    <scope>INTERACTION WITH PTK2/FAK1</scope>
</reference>
<reference key="21">
    <citation type="journal article" date="2005" name="Acta Biochim. Pol.">
        <title>Calcium-binding calmyrin forms stable covalent dimers in vitro, but in vivo is found in monomeric form.</title>
        <authorList>
            <person name="Sobczak A."/>
            <person name="Blazejczyk M."/>
            <person name="Piszczek G."/>
            <person name="Zhao G."/>
            <person name="Kuznicki J."/>
            <person name="Wojda U."/>
        </authorList>
    </citation>
    <scope>SUBUNIT</scope>
</reference>
<reference key="22">
    <citation type="journal article" date="2005" name="Cancer Immunol. Immunother.">
        <title>G1P3, an interferon inducible gene 6-16, is expressed in gastric cancers and inhibits mitochondrial-mediated apoptosis in gastric cancer cell line TMK-1 cell.</title>
        <authorList>
            <person name="Tahara E. Jr."/>
            <person name="Tahara H."/>
            <person name="Kanno M."/>
            <person name="Naka K."/>
            <person name="Takeda Y."/>
            <person name="Matsuzaki T."/>
            <person name="Yamazaki R."/>
            <person name="Ishihara H."/>
            <person name="Yasui W."/>
            <person name="Barrett J.C."/>
            <person name="Ide T."/>
            <person name="Tahara E."/>
        </authorList>
    </citation>
    <scope>FUNCTION</scope>
    <scope>INTERACTION WITH IFI6 AND BCL2</scope>
</reference>
<reference key="23">
    <citation type="journal article" date="2005" name="J. Cell Biol.">
        <title>Essential role of CIB1 in regulating PAK1 activation and cell migration.</title>
        <authorList>
            <person name="Leisner T.M."/>
            <person name="Liu M."/>
            <person name="Jaffer Z.M."/>
            <person name="Chernoff J."/>
            <person name="Parise L.V."/>
        </authorList>
    </citation>
    <scope>FUNCTION</scope>
    <scope>INTERACTION WITH PAK1</scope>
</reference>
<reference key="24">
    <citation type="journal article" date="2005" name="Protein Sci.">
        <title>Calcium- and magnesium-dependent interactions between calcium- and integrin-binding protein and the integrin alphaIIb cytoplasmic domain.</title>
        <authorList>
            <person name="Yamniuk A.P."/>
            <person name="Vogel H.J."/>
        </authorList>
    </citation>
    <scope>INTERACTION WITH ITGA2B</scope>
    <scope>CALCIUM-BINDING</scope>
    <scope>MAGNESIUM-BINDING</scope>
</reference>
<reference key="25">
    <citation type="journal article" date="2006" name="J. Biol. Chem.">
        <title>CIB1, a ubiquitously expressed Ca2+-binding protein ligand of the InsP3 receptor Ca2+ release channel.</title>
        <authorList>
            <person name="White C."/>
            <person name="Yang J."/>
            <person name="Monteiro M.J."/>
            <person name="Foskett J.K."/>
        </authorList>
    </citation>
    <scope>INTERACTION WITH ITPR3</scope>
</reference>
<reference key="26">
    <citation type="journal article" date="2006" name="J. Cell Biol.">
        <title>CIB1 is an endogenous inhibitor of agonist-induced integrin alphaIIbbeta3 activation.</title>
        <authorList>
            <person name="Yuan W."/>
            <person name="Leisner T.M."/>
            <person name="McFadden A.W."/>
            <person name="Wang Z."/>
            <person name="Larson M.K."/>
            <person name="Clark S."/>
            <person name="Boudignon-Proudhon C."/>
            <person name="Lam S.C."/>
            <person name="Parise L.V."/>
        </authorList>
    </citation>
    <scope>FUNCTION</scope>
    <scope>INTERACTION WITH PAK1</scope>
    <scope>SUBCELLULAR LOCATION</scope>
    <scope>MUTAGENESIS OF PHE-173</scope>
</reference>
<reference key="27">
    <citation type="journal article" date="2008" name="J. Neurochem.">
        <title>Sweet taste receptor interacting protein CIB1 is a general inhibitor of InsP3-dependent Ca2+ release in vivo.</title>
        <authorList>
            <person name="Hennigs J.K."/>
            <person name="Burhenne N."/>
            <person name="Staehler F."/>
            <person name="Winnig M."/>
            <person name="Walter B."/>
            <person name="Meyerhof W."/>
            <person name="Schmale H."/>
        </authorList>
    </citation>
    <scope>FUNCTION</scope>
    <scope>INTERACTION WITH TAS1R2</scope>
    <scope>SUBCELLULAR LOCATION</scope>
</reference>
<reference key="28">
    <citation type="journal article" date="2009" name="Proc. Natl. Acad. Sci. U.S.A.">
        <title>CIB1 functions as a Ca(2+)-sensitive modulator of stress-induced signaling by targeting ASK1.</title>
        <authorList>
            <person name="Yoon K.W."/>
            <person name="Cho J.H."/>
            <person name="Lee J.K."/>
            <person name="Kang Y.H."/>
            <person name="Chae J.S."/>
            <person name="Kim Y.M."/>
            <person name="Kim J."/>
            <person name="Kim E.K."/>
            <person name="Kim S.E."/>
            <person name="Baik J.H."/>
            <person name="Naik U.P."/>
            <person name="Cho S.G."/>
            <person name="Choi E.J."/>
        </authorList>
    </citation>
    <scope>FUNCTION</scope>
    <scope>INTERACTION WITH MAP3K5</scope>
</reference>
<reference key="29">
    <citation type="journal article" date="2009" name="Protein Sci.">
        <title>Auxiliary Ca2+ binding sites can influence the structure of CIB1.</title>
        <authorList>
            <person name="Yamniuk A.P."/>
            <person name="Anderson K.L."/>
            <person name="Fraser M.E."/>
            <person name="Vogel H.J."/>
        </authorList>
    </citation>
    <scope>SUBUNIT</scope>
    <scope>CALCIUM-BINDING</scope>
</reference>
<reference key="30">
    <citation type="journal article" date="2010" name="J. Biol. Chem.">
        <title>Translocation of sphingosine kinase 1 to the plasma membrane is mediated by calcium- and integrin-binding protein 1.</title>
        <authorList>
            <person name="Jarman K.E."/>
            <person name="Moretti P.A."/>
            <person name="Zebol J.R."/>
            <person name="Pitson S.M."/>
        </authorList>
    </citation>
    <scope>INTERACTION WITH SPHK1</scope>
    <scope>SUBCELLULAR LOCATION</scope>
    <scope>MUTAGENESIS OF GLY-2</scope>
</reference>
<reference key="31">
    <citation type="journal article" date="2010" name="Nat. Med.">
        <title>CIB1 is a regulator of pathological cardiac hypertrophy.</title>
        <authorList>
            <person name="Heineke J."/>
            <person name="Auger-Messier M."/>
            <person name="Correll R.N."/>
            <person name="Xu J."/>
            <person name="Benard M.J."/>
            <person name="Yuan W."/>
            <person name="Drexler H."/>
            <person name="Parise L.V."/>
            <person name="Molkentin J.D."/>
        </authorList>
    </citation>
    <scope>SUBCELLULAR LOCATION</scope>
</reference>
<reference key="32">
    <citation type="journal article" date="2011" name="Biochim. Biophys. Acta">
        <title>Calmyrin1 binds to SCG10 protein (stathmin2) to modulate neurite outgrowth.</title>
        <authorList>
            <person name="Sobczak A."/>
            <person name="Debowska K."/>
            <person name="Blazejczyk M."/>
            <person name="Kreutz M.R."/>
            <person name="Kuznicki J."/>
            <person name="Wojda U."/>
        </authorList>
    </citation>
    <scope>INTERACTION WITH STMN2</scope>
    <scope>SUBCELLULAR LOCATION</scope>
</reference>
<reference key="33">
    <citation type="journal article" date="2011" name="Int. J. Biochem. Cell Biol.">
        <title>Calcium- and integrin-binding protein 1 regulates microtubule organization and centrosome segregation through polo like kinase 3 during cell cycle progression.</title>
        <authorList>
            <person name="Naik M.U."/>
            <person name="Naik U.P."/>
        </authorList>
    </citation>
    <scope>FUNCTION</scope>
    <scope>INTERACTION WITH PLK3</scope>
    <scope>SUBCELLULAR LOCATION (ISOFORM 1)</scope>
</reference>
<reference key="34">
    <citation type="journal article" date="2011" name="Int. J. Cancer">
        <title>Calcium-dependent inhibition of polo-like kinase 3 activity by CIB1 in breast cancer cells.</title>
        <authorList>
            <person name="Naik M.U."/>
            <person name="Pham N.T."/>
            <person name="Beebe K."/>
            <person name="Dai W."/>
            <person name="Naik U.P."/>
        </authorList>
    </citation>
    <scope>INTERACTION WITH PLK3</scope>
</reference>
<reference key="35">
    <citation type="journal article" date="2011" name="J. Cell. Biochem.">
        <title>Contra-regulation of calcium- and integrin-binding protein 1-induced cell migration on fibronectin by PAK1 and MAP kinase signaling.</title>
        <authorList>
            <person name="Naik M.U."/>
            <person name="Naik U.P."/>
        </authorList>
    </citation>
    <scope>FUNCTION</scope>
    <scope>SUBCELLULAR LOCATION (ISOFORM 1)</scope>
</reference>
<reference key="36">
    <citation type="journal article" date="2011" name="PLoS ONE">
        <title>Calcium- and integrin-binding protein 1 regulates endomitosis and its interaction with Polo-like kinase 3 is enhanced in endomitotic Dami cells.</title>
        <authorList>
            <person name="Kostyak J.C."/>
            <person name="Naik U.P."/>
        </authorList>
    </citation>
    <scope>FUNCTION</scope>
    <scope>INTERACTION WITH PLK3</scope>
</reference>
<reference key="37">
    <citation type="journal article" date="2012" name="Biochem. Cell Biol.">
        <title>Biophysical and structural studies of the human calcium- and integrin-binding protein family: understanding their functional similarities and differences.</title>
        <authorList>
            <person name="Huang H."/>
            <person name="Bogstie J.N."/>
            <person name="Vogel H.J."/>
        </authorList>
    </citation>
    <scope>INTERACTION WITH ITGA2B</scope>
</reference>
<reference key="38">
    <citation type="journal article" date="2013" name="Biochemistry">
        <title>Identification of novel integrin binding partners for calcium and integrin binding protein 1 (CIB1): structural and thermodynamic basis of CIB1 promiscuity.</title>
        <authorList>
            <person name="Freeman T.C. Jr."/>
            <person name="Black J.L."/>
            <person name="Bray H.G."/>
            <person name="Dagliyan O."/>
            <person name="Wu Y.I."/>
            <person name="Tripathy A."/>
            <person name="Dokholyan N.V."/>
            <person name="Leisner T.M."/>
            <person name="Parise L.V."/>
        </authorList>
    </citation>
    <scope>INTERACTION WITH ITGA5 AND ITGAV</scope>
    <scope>MUTAGENESIS OF 114-ILE--PHE-117; 152-LEU-ILE-153 AND PHE-173</scope>
</reference>
<reference key="39">
    <citation type="journal article" date="2013" name="Oncogene">
        <title>CIB1 prevents nuclear GAPDH accumulation and non-apoptotic tumor cell death via AKT and ERK signaling.</title>
        <authorList>
            <person name="Leisner T.M."/>
            <person name="Moran C."/>
            <person name="Holly S.P."/>
            <person name="Parise L.V."/>
        </authorList>
    </citation>
    <scope>FUNCTION</scope>
</reference>
<reference key="40">
    <citation type="journal article" date="2015" name="Proteomics">
        <title>N-terminome analysis of the human mitochondrial proteome.</title>
        <authorList>
            <person name="Vaca Jacome A.S."/>
            <person name="Rabilloud T."/>
            <person name="Schaeffer-Reiss C."/>
            <person name="Rompais M."/>
            <person name="Ayoub D."/>
            <person name="Lane L."/>
            <person name="Bairoch A."/>
            <person name="Van Dorsselaer A."/>
            <person name="Carapito C."/>
        </authorList>
    </citation>
    <scope>IDENTIFICATION BY MASS SPECTROMETRY [LARGE SCALE ANALYSIS]</scope>
</reference>
<reference key="41">
    <citation type="journal article" date="2020" name="J. Biol. Chem.">
        <title>Expression of a TMC6-TMC8-CIB1 heterotrimeric complex in lymphocytes is regulated by each of the components.</title>
        <authorList>
            <person name="Wu C.J."/>
            <person name="Li X."/>
            <person name="Sommers C.L."/>
            <person name="Kurima K."/>
            <person name="Huh S."/>
            <person name="Bugos G."/>
            <person name="Dong L."/>
            <person name="Li W."/>
            <person name="Griffith A.J."/>
            <person name="Samelson L.E."/>
        </authorList>
    </citation>
    <scope>FUNCTION</scope>
    <scope>INTERACTION WITH TMC6 AMD TMC8</scope>
</reference>
<reference key="42">
    <citation type="journal article" date="2018" name="J. Exp. Med.">
        <title>The human CIB1-EVER1-EVER2 complex governs keratinocyte-intrinsic immunity to beta-papillomaviruses.</title>
        <authorList>
            <person name="de Jong S.J."/>
            <person name="Crequer A."/>
            <person name="Matos I."/>
            <person name="Hum D."/>
            <person name="Gunasekharan V."/>
            <person name="Lorenzo L."/>
            <person name="Jabot-Hanin F."/>
            <person name="Imahorn E."/>
            <person name="Arias A.A."/>
            <person name="Vahidnezhad H."/>
            <person name="Youssefian L."/>
            <person name="Markle J.G."/>
            <person name="Patin E."/>
            <person name="D'Amico A."/>
            <person name="Wang C.Q.F."/>
            <person name="Full F."/>
            <person name="Ensser A."/>
            <person name="Leisner T.M."/>
            <person name="Parise L.V."/>
            <person name="Bouaziz M."/>
            <person name="Maya N.P."/>
            <person name="Cadena X.R."/>
            <person name="Saka B."/>
            <person name="Saeidian A.H."/>
            <person name="Aghazadeh N."/>
            <person name="Zeinali S."/>
            <person name="Itin P."/>
            <person name="Krueger J.G."/>
            <person name="Laimins L."/>
            <person name="Abel L."/>
            <person name="Fuchs E."/>
            <person name="Uitto J."/>
            <person name="Franco J.L."/>
            <person name="Burger B."/>
            <person name="Orth G."/>
            <person name="Jouanguy E."/>
            <person name="Casanova J.L."/>
        </authorList>
    </citation>
    <scope>FUNCTION</scope>
    <scope>INTERACTION WITH HPV (MICROBIAL INFECTION)</scope>
    <scope>TISSUE SPECIFICITY</scope>
    <scope>SUBCELLULAR LOCATION</scope>
    <scope>INTERACTION WITH TMC6 AND TMC8</scope>
    <scope>INVOLVEMENT IN EV3</scope>
    <scope>VARIANT EV3 72-ARG--LEU-191 DEL</scope>
    <scope>CHARACTERIZATION OF VARIANT EV3 72-ARG--LEU-191 DEL</scope>
</reference>
<reference key="43">
    <citation type="journal article" date="2000" name="J. Mol. Recognit.">
        <title>Structures of the platelet calcium- and integrin-binding protein and the alphaIIb-integrin cytoplasmic domain suggest a mechanism for calcium-regulated recognition; homology modelling and NMR studies.</title>
        <authorList>
            <person name="Hwang P.M."/>
            <person name="Vogel H.J."/>
        </authorList>
    </citation>
    <scope>STRUCTURE BY NMR OF 9-191</scope>
</reference>
<reference key="44">
    <citation type="journal article" date="2005" name="J. Biol. Chem.">
        <title>Structural and biochemical characterization of CIB1 delineates a new family of EF-hand-containing proteins.</title>
        <authorList>
            <person name="Gentry H.R."/>
            <person name="Singer A.U."/>
            <person name="Betts L."/>
            <person name="Yang C."/>
            <person name="Ferrara J.D."/>
            <person name="Sondek J."/>
            <person name="Parise L.V."/>
        </authorList>
    </citation>
    <scope>X-RAY CRYSTALLOGRAPHY (1.99 ANGSTROMS) OF 9-191 IN COMPLEX WITH CALCIUM IONS</scope>
    <scope>SUBUNIT</scope>
</reference>
<reference key="45">
    <citation type="journal article" date="2005" name="Protein Sci.">
        <title>The crystal structure of calcium- and integrin-binding protein 1: insights into redox regulated functions.</title>
        <authorList>
            <person name="Blamey C.J."/>
            <person name="Ceccarelli C."/>
            <person name="Naik U.P."/>
            <person name="Bahnson B.J."/>
        </authorList>
    </citation>
    <scope>X-RAY CRYSTALLOGRAPHY (2.3 ANGSTROMS) OF 9-191</scope>
</reference>
<reference key="46">
    <citation type="journal article" date="2011" name="J. Biol. Chem.">
        <title>Solution structures of Ca2+-CIB1 and Mg2+-CIB1 and their interactions with the platelet integrin alphaIIb cytoplasmic domain.</title>
        <authorList>
            <person name="Huang H."/>
            <person name="Ishida H."/>
            <person name="Yamniuk A.P."/>
            <person name="Vogel H.J."/>
        </authorList>
    </citation>
    <scope>STRUCTURE BY NMR OF 1-191 IN COMPLEXES WITH CALCIUM IONS AND MAGNESIUM ION</scope>
    <scope>INTERACTION WITH ITGA2B</scope>
</reference>
<reference key="47">
    <citation type="journal article" date="2012" name="J. Am. Chem. Soc.">
        <title>Structural basis for the activation of platelet integrin alphaIIbbeta3 by calcium- and integrin-binding protein 1.</title>
        <authorList>
            <person name="Huang H."/>
            <person name="Vogel H.J."/>
        </authorList>
    </citation>
    <scope>STRUCTURE BY NMR OF 1-191 IN COMPLEX WITH ITGA2B PEPTIDE AND CALCIUM IONS</scope>
    <scope>INTERACTION WITH ITGA2B</scope>
</reference>
<organism>
    <name type="scientific">Homo sapiens</name>
    <name type="common">Human</name>
    <dbReference type="NCBI Taxonomy" id="9606"/>
    <lineage>
        <taxon>Eukaryota</taxon>
        <taxon>Metazoa</taxon>
        <taxon>Chordata</taxon>
        <taxon>Craniata</taxon>
        <taxon>Vertebrata</taxon>
        <taxon>Euteleostomi</taxon>
        <taxon>Mammalia</taxon>
        <taxon>Eutheria</taxon>
        <taxon>Euarchontoglires</taxon>
        <taxon>Primates</taxon>
        <taxon>Haplorrhini</taxon>
        <taxon>Catarrhini</taxon>
        <taxon>Hominidae</taxon>
        <taxon>Homo</taxon>
    </lineage>
</organism>
<evidence type="ECO:0000250" key="1"/>
<evidence type="ECO:0000255" key="2">
    <source>
        <dbReference type="PROSITE-ProRule" id="PRU00448"/>
    </source>
</evidence>
<evidence type="ECO:0000269" key="3">
    <source>
    </source>
</evidence>
<evidence type="ECO:0000269" key="4">
    <source>
    </source>
</evidence>
<evidence type="ECO:0000269" key="5">
    <source>
    </source>
</evidence>
<evidence type="ECO:0000269" key="6">
    <source>
    </source>
</evidence>
<evidence type="ECO:0000269" key="7">
    <source>
    </source>
</evidence>
<evidence type="ECO:0000269" key="8">
    <source>
    </source>
</evidence>
<evidence type="ECO:0000269" key="9">
    <source>
    </source>
</evidence>
<evidence type="ECO:0000269" key="10">
    <source>
    </source>
</evidence>
<evidence type="ECO:0000269" key="11">
    <source>
    </source>
</evidence>
<evidence type="ECO:0000269" key="12">
    <source>
    </source>
</evidence>
<evidence type="ECO:0000269" key="13">
    <source>
    </source>
</evidence>
<evidence type="ECO:0000269" key="14">
    <source>
    </source>
</evidence>
<evidence type="ECO:0000269" key="15">
    <source>
    </source>
</evidence>
<evidence type="ECO:0000269" key="16">
    <source>
    </source>
</evidence>
<evidence type="ECO:0000269" key="17">
    <source>
    </source>
</evidence>
<evidence type="ECO:0000269" key="18">
    <source>
    </source>
</evidence>
<evidence type="ECO:0000269" key="19">
    <source>
    </source>
</evidence>
<evidence type="ECO:0000269" key="20">
    <source>
    </source>
</evidence>
<evidence type="ECO:0000269" key="21">
    <source>
    </source>
</evidence>
<evidence type="ECO:0000269" key="22">
    <source>
    </source>
</evidence>
<evidence type="ECO:0000269" key="23">
    <source>
    </source>
</evidence>
<evidence type="ECO:0000269" key="24">
    <source>
    </source>
</evidence>
<evidence type="ECO:0000269" key="25">
    <source>
    </source>
</evidence>
<evidence type="ECO:0000269" key="26">
    <source>
    </source>
</evidence>
<evidence type="ECO:0000269" key="27">
    <source>
    </source>
</evidence>
<evidence type="ECO:0000269" key="28">
    <source>
    </source>
</evidence>
<evidence type="ECO:0000269" key="29">
    <source>
    </source>
</evidence>
<evidence type="ECO:0000269" key="30">
    <source>
    </source>
</evidence>
<evidence type="ECO:0000269" key="31">
    <source>
    </source>
</evidence>
<evidence type="ECO:0000269" key="32">
    <source>
    </source>
</evidence>
<evidence type="ECO:0000269" key="33">
    <source>
    </source>
</evidence>
<evidence type="ECO:0000269" key="34">
    <source>
    </source>
</evidence>
<evidence type="ECO:0000269" key="35">
    <source>
    </source>
</evidence>
<evidence type="ECO:0000269" key="36">
    <source>
    </source>
</evidence>
<evidence type="ECO:0000269" key="37">
    <source>
    </source>
</evidence>
<evidence type="ECO:0000269" key="38">
    <source ref="5"/>
</evidence>
<evidence type="ECO:0000303" key="39">
    <source>
    </source>
</evidence>
<evidence type="ECO:0000305" key="40"/>
<evidence type="ECO:0000305" key="41">
    <source>
    </source>
</evidence>
<evidence type="ECO:0000305" key="42">
    <source>
    </source>
</evidence>
<evidence type="ECO:0007829" key="43">
    <source>
        <dbReference type="PDB" id="1DGU"/>
    </source>
</evidence>
<evidence type="ECO:0007829" key="44">
    <source>
        <dbReference type="PDB" id="1XO5"/>
    </source>
</evidence>
<evidence type="ECO:0007829" key="45">
    <source>
        <dbReference type="PDB" id="1Y1A"/>
    </source>
</evidence>
<evidence type="ECO:0007829" key="46">
    <source>
        <dbReference type="PDB" id="2L4I"/>
    </source>
</evidence>
<evidence type="ECO:0007829" key="47">
    <source>
        <dbReference type="PDB" id="6OCX"/>
    </source>
</evidence>
<comment type="function">
    <text evidence="34 35">Calcium-binding protein that plays a role in the regulation of numerous cellular processes, such as cell differentiation, cell division, cell proliferation, cell migration, thrombosis, angiogenesis, cardiac hypertrophy and apoptosis. Involved in bone marrow megakaryocyte differentiation by negatively regulating thrombopoietin-mediated signaling pathway. Participates in the endomitotic cell cycle of megakaryocyte, a form of mitosis in which both karyokinesis and cytokinesis are interrupted. Plays a role in integrin signaling by negatively regulating alpha-IIb/beta3 activation in thrombin-stimulated megakaryocytes preventing platelet aggregation. Up-regulates PTK2/FAK1 activity, and is also needed for the recruitment of PTK2/FAK1 to focal adhesions; it thus appears to play an important role in focal adhesion formation. Positively regulates cell migration on fibronectin in a CDC42-dependent manner, the effect being negatively regulated by PAK1. Functions as a negative regulator of stress activated MAP kinase (MAPK) signaling pathways. Down-regulates inositol 1,4,5-trisphosphate receptor-dependent calcium signaling. Involved in sphingosine kinase SPHK1 translocation to the plasma membrane in a N-myristoylation-dependent manner preventing TNF-alpha-induced apoptosis. Regulates serine/threonine-protein kinase PLK3 activity for proper completion of cell division progression. Plays a role in microtubule (MT) dynamics during neuronal development; disrupts the MT depolymerization activity of STMN2 attenuating NGF-induced neurite outgrowth and the MT reorganization at the edge of lamellipodia. Promotes cardiomyocyte hypertrophy via activation of the calcineurin/NFAT signaling pathway. Stimulates calcineurin PPP3R1 activity by mediating its anchoring to the sarcolemma. In ischemia-induced (pathological or adaptive) angiogenesis, stimulates endothelial cell proliferation, migration and microvessel formation by activating the PAK1 and ERK1/ERK2 signaling pathway. Also promotes cancer cell survival and proliferation. May regulate cell cycle and differentiation of spermatogenic germ cells, and/or differentiation of supporting Sertoli cells. Forms a complex with TMC6/EVER1 and TMC8/EVER2 in lymphocytes and keratynocytes where CIB1 stabilizes TMC6 and TMC8 levels and reciprocally (PubMed:30068544, PubMed:32917726).</text>
</comment>
<comment type="function">
    <text evidence="34">Acts as a restriction factor that promotes keratinocyte-intrinsic immunity to human beta-papillomaviruses (HPVs).</text>
</comment>
<comment type="function">
    <molecule>Isoform 2</molecule>
    <text evidence="32">Plays a regulatory role in angiogenesis and tumor growth by mediating PKD/PRKD2-induced vascular endothelial growth factor A (VEGFA) secretion.</text>
</comment>
<comment type="subunit">
    <text evidence="1 3 4 6 7 8 9 10 11 12 13 14 15 16 17 18 19 20 21 22 23 24 25 26 27 28 29 30 31 32 33 34 35 36 37">Monomer. Interacts with MYO1C. Interacts (via C-terminal region) with PPP3R1 and CACNA1C; the interactions increase upon cardiomyocytes hypertrophy (By similarity). Interacts with the heterodimeric integrin alpha-IIb/beta3 (ITGA2B-ITGB3). Interacts with ITGA2B (via cytoplasmic domain); the interaction is direct and calcium-dependent. Interacts with the protein kinases PLK2/SNK and PRKDC (via the region immediately upstream of the kinase domain). Interacts with PLK3; the interaction inhibits PLK3 kinase activity. Interacts with PSEN2. Interacts (via C-terminus) with F8. Interacts with NBR1 (via C-terminus). Interacts with FEZ1 (via C-terminus). Interacts with UBR5 (via C-terminus); the interaction is sensitive to DNA damage, and may target CIB1 for ubiquitin-mediated degradation. Interacts with IFI6; the interaction is direct (PubMed:15685448). Interacts with BCL2 (PubMed:15685448). Interacts with ITPR3; the interaction occurs in a calcium-dependent manner. Interacts with PTK2/FAK1. Interacts with MAP3K5; the interaction inhibits MAP3K5 activation by phosphorylation, and its subsequent interaction with TRAF2. Isoform 2 interacts with PRKD2 (via N-terminal AP-rich region), PTK2/FAK1 and PAK1. Interacts with TAS1R2 (via C-terminus); the interaction is independent of the myristoylation state of CIB1. Interacts (via C-terminal region) with STMN2 (via the N-terminal region); the interaction is direct, occurs in a calcium-dependent manner and attenuates the STMN2-induced neurite outgrowth inhibition. Interacts with SPHK1, the interaction occurs in a calcium-dependent manner. Interacts with ITGA2B (via C-terminal cytoplasmic tail); the interaction occurs upon platelet aggregation and is stabilized/increased in a calcium and magnesium-dependent manner. Interacts with PAK1 (via N-terminal region); the interaction is direct and occurs in a calcium-dependent manner. Interacts with RAC3 (via C-terminal region); the interaction induces their association with the cytoskeleton upon alpha-IIb/beta3 integrin-mediated adhesion. Interacts with ITGA5 and ITGAV. Interacts and forms a complex with TMC6 and TMC8; the interaction stabilizes each component of the complex (PubMed:30068544, PubMed:32917726).</text>
</comment>
<comment type="subunit">
    <text evidence="34">(Microbial infection) Interacts with human papillomavirus 4/HPV4 protein E8, human papillomavirus 5/HPV5 protein E1, and human papillomavirus 16/HPV16 proteins E2 and E5.</text>
</comment>
<comment type="interaction">
    <interactant intactId="EBI-372594">
        <id>Q99828</id>
    </interactant>
    <interactant intactId="EBI-12883326">
        <id>P10092</id>
        <label>CALCB</label>
    </interactant>
    <organismsDiffer>false</organismsDiffer>
    <experiments>3</experiments>
</comment>
<comment type="interaction">
    <interactant intactId="EBI-372594">
        <id>Q99828</id>
    </interactant>
    <interactant intactId="EBI-520729">
        <id>P26842</id>
        <label>CD27</label>
    </interactant>
    <organismsDiffer>false</organismsDiffer>
    <experiments>7</experiments>
</comment>
<comment type="interaction">
    <interactant intactId="EBI-372594">
        <id>Q99828</id>
    </interactant>
    <interactant intactId="EBI-4314501">
        <id>P40199</id>
        <label>CEACAM6</label>
    </interactant>
    <organismsDiffer>false</organismsDiffer>
    <experiments>3</experiments>
</comment>
<comment type="interaction">
    <interactant intactId="EBI-372594">
        <id>Q99828</id>
    </interactant>
    <interactant intactId="EBI-12012124">
        <id>Q04637-9</id>
        <label>EIF4G1</label>
    </interactant>
    <organismsDiffer>false</organismsDiffer>
    <experiments>7</experiments>
</comment>
<comment type="interaction">
    <interactant intactId="EBI-372594">
        <id>Q99828</id>
    </interactant>
    <interactant intactId="EBI-12920100">
        <id>Q6UXG2-3</id>
        <label>ELAPOR1</label>
    </interactant>
    <organismsDiffer>false</organismsDiffer>
    <experiments>3</experiments>
</comment>
<comment type="interaction">
    <interactant intactId="EBI-372594">
        <id>Q99828</id>
    </interactant>
    <interactant intactId="EBI-2512153">
        <id>P04066</id>
        <label>FUCA1</label>
    </interactant>
    <organismsDiffer>false</organismsDiffer>
    <experiments>3</experiments>
</comment>
<comment type="interaction">
    <interactant intactId="EBI-372594">
        <id>Q99828</id>
    </interactant>
    <interactant intactId="EBI-12232117">
        <id>Q8NEA6-2</id>
        <label>GLIS3</label>
    </interactant>
    <organismsDiffer>false</organismsDiffer>
    <experiments>5</experiments>
</comment>
<comment type="interaction">
    <interactant intactId="EBI-372594">
        <id>Q99828</id>
    </interactant>
    <interactant intactId="EBI-1035358">
        <id>P05362</id>
        <label>ICAM1</label>
    </interactant>
    <organismsDiffer>false</organismsDiffer>
    <experiments>3</experiments>
</comment>
<comment type="interaction">
    <interactant intactId="EBI-372594">
        <id>Q99828</id>
    </interactant>
    <interactant intactId="EBI-399080">
        <id>Q92993</id>
        <label>KAT5</label>
    </interactant>
    <organismsDiffer>false</organismsDiffer>
    <experiments>3</experiments>
</comment>
<comment type="interaction">
    <interactant intactId="EBI-372594">
        <id>Q99828</id>
    </interactant>
    <interactant intactId="EBI-11742507">
        <id>Q8TAP4-4</id>
        <label>LMO3</label>
    </interactant>
    <organismsDiffer>false</organismsDiffer>
    <experiments>3</experiments>
</comment>
<comment type="interaction">
    <interactant intactId="EBI-372594">
        <id>Q99828</id>
    </interactant>
    <interactant intactId="EBI-3930711">
        <id>P48449</id>
        <label>LSS</label>
    </interactant>
    <organismsDiffer>false</organismsDiffer>
    <experiments>3</experiments>
</comment>
<comment type="interaction">
    <interactant intactId="EBI-372594">
        <id>Q99828</id>
    </interactant>
    <interactant intactId="EBI-476263">
        <id>Q99683</id>
        <label>MAP3K5</label>
    </interactant>
    <organismsDiffer>false</organismsDiffer>
    <experiments>7</experiments>
</comment>
<comment type="interaction">
    <interactant intactId="EBI-372594">
        <id>Q99828</id>
    </interactant>
    <interactant intactId="EBI-713635">
        <id>O43639</id>
        <label>NCK2</label>
    </interactant>
    <organismsDiffer>false</organismsDiffer>
    <experiments>3</experiments>
</comment>
<comment type="interaction">
    <interactant intactId="EBI-372594">
        <id>Q99828</id>
    </interactant>
    <interactant intactId="EBI-744871">
        <id>O00746</id>
        <label>NME4</label>
    </interactant>
    <organismsDiffer>false</organismsDiffer>
    <experiments>3</experiments>
</comment>
<comment type="interaction">
    <interactant intactId="EBI-372594">
        <id>Q99828</id>
    </interactant>
    <interactant intactId="EBI-17431136">
        <id>O60422</id>
        <label>ONECUT3</label>
    </interactant>
    <organismsDiffer>false</organismsDiffer>
    <experiments>3</experiments>
</comment>
<comment type="interaction">
    <interactant intactId="EBI-372594">
        <id>Q99828</id>
    </interactant>
    <interactant intactId="EBI-12859446">
        <id>P23759-2</id>
        <label>PAX7</label>
    </interactant>
    <organismsDiffer>false</organismsDiffer>
    <experiments>3</experiments>
</comment>
<comment type="interaction">
    <interactant intactId="EBI-372594">
        <id>Q99828</id>
    </interactant>
    <interactant intactId="EBI-1222181">
        <id>Q9H7N4</id>
        <label>SCAF1</label>
    </interactant>
    <organismsDiffer>false</organismsDiffer>
    <experiments>5</experiments>
</comment>
<comment type="interaction">
    <interactant intactId="EBI-372594">
        <id>Q99828</id>
    </interactant>
    <interactant intactId="EBI-9090795">
        <id>Q15047-2</id>
        <label>SETDB1</label>
    </interactant>
    <organismsDiffer>false</organismsDiffer>
    <experiments>3</experiments>
</comment>
<comment type="interaction">
    <interactant intactId="EBI-372594">
        <id>Q99828</id>
    </interactant>
    <interactant intactId="EBI-5235340">
        <id>Q7Z699</id>
        <label>SPRED1</label>
    </interactant>
    <organismsDiffer>false</organismsDiffer>
    <experiments>3</experiments>
</comment>
<comment type="interaction">
    <interactant intactId="EBI-372594">
        <id>Q99828</id>
    </interactant>
    <interactant intactId="EBI-12879730">
        <id>Q7RTT5</id>
        <label>SSX7</label>
    </interactant>
    <organismsDiffer>false</organismsDiffer>
    <experiments>5</experiments>
</comment>
<comment type="interaction">
    <interactant intactId="EBI-372594">
        <id>Q99828</id>
    </interactant>
    <interactant intactId="EBI-714194">
        <id>Q93045</id>
        <label>STMN2</label>
    </interactant>
    <organismsDiffer>false</organismsDiffer>
    <experiments>8</experiments>
</comment>
<comment type="interaction">
    <interactant intactId="EBI-372594">
        <id>Q99828</id>
    </interactant>
    <interactant intactId="EBI-12892569">
        <id>Q3KNT9</id>
        <label>TMEM95</label>
    </interactant>
    <organismsDiffer>false</organismsDiffer>
    <experiments>3</experiments>
</comment>
<comment type="interaction">
    <interactant intactId="EBI-372594">
        <id>Q99828</id>
    </interactant>
    <interactant intactId="EBI-10241197">
        <id>Q3SY00</id>
        <label>TSGA10IP</label>
    </interactant>
    <organismsDiffer>false</organismsDiffer>
    <experiments>3</experiments>
</comment>
<comment type="interaction">
    <interactant intactId="EBI-372594">
        <id>Q99828</id>
    </interactant>
    <interactant intactId="EBI-957615">
        <id>O00401</id>
        <label>WASL</label>
    </interactant>
    <organismsDiffer>false</organismsDiffer>
    <experiments>7</experiments>
</comment>
<comment type="interaction">
    <interactant intactId="EBI-372594">
        <id>Q99828</id>
    </interactant>
    <interactant intactId="EBI-359832">
        <id>P61981</id>
        <label>YWHAG</label>
    </interactant>
    <organismsDiffer>false</organismsDiffer>
    <experiments>3</experiments>
</comment>
<comment type="interaction">
    <interactant intactId="EBI-372594">
        <id>Q99828</id>
    </interactant>
    <interactant intactId="EBI-2859943">
        <id>Q6ZSB9</id>
        <label>ZBTB49</label>
    </interactant>
    <organismsDiffer>false</organismsDiffer>
    <experiments>3</experiments>
</comment>
<comment type="subcellular location">
    <subcellularLocation>
        <location>Membrane</location>
        <topology>Lipid-anchor</topology>
    </subcellularLocation>
    <subcellularLocation>
        <location>Cell membrane</location>
        <location>Sarcolemma</location>
    </subcellularLocation>
    <subcellularLocation>
        <location>Cell membrane</location>
    </subcellularLocation>
    <subcellularLocation>
        <location>Apical cell membrane</location>
    </subcellularLocation>
    <subcellularLocation>
        <location>Cell projection</location>
        <location>Ruffle membrane</location>
    </subcellularLocation>
    <subcellularLocation>
        <location>Cell projection</location>
        <location>Filopodium tip</location>
    </subcellularLocation>
    <subcellularLocation>
        <location evidence="27">Cell projection</location>
        <location evidence="27">Growth cone</location>
    </subcellularLocation>
    <subcellularLocation>
        <location evidence="27">Cell projection</location>
        <location evidence="27">Lamellipodium</location>
    </subcellularLocation>
    <subcellularLocation>
        <location>Cytoplasm</location>
    </subcellularLocation>
    <subcellularLocation>
        <location>Cytoplasm</location>
        <location>Cytoskeleton</location>
    </subcellularLocation>
    <subcellularLocation>
        <location>Cytoplasm</location>
        <location>Cytoskeleton</location>
        <location>Microtubule organizing center</location>
        <location>Centrosome</location>
    </subcellularLocation>
    <subcellularLocation>
        <location>Cytoplasm</location>
        <location>Perinuclear region</location>
    </subcellularLocation>
    <subcellularLocation>
        <location evidence="34">Nucleus</location>
    </subcellularLocation>
    <subcellularLocation>
        <location evidence="27">Cell projection</location>
        <location evidence="27">Neuron projection</location>
    </subcellularLocation>
    <subcellularLocation>
        <location evidence="27">Perikaryon</location>
    </subcellularLocation>
    <text evidence="1">Colocalized with PPP3R1 at the cell membrane of cardiomyocytes in the hypertrophic heart (By similarity). Colocalized with NBR1 to the perinuclear region. Colocalizes with TAS1R2 in apical regions of taste receptor cells. Colocalized with RAC3 in the perinuclear area and at the cell periphery. Colocalized with PAK1 within membrane ruffles during cell spreading upon readhesion to fibronectin. Redistributed to the cytoskeleton upon platelet aggregation. Translocates from the cytosol to the plasma membrane in a calcium-dependent manner. Colocalized with PLK3 at centrosomes in ductal breast carcinoma cells.</text>
</comment>
<comment type="subcellular location">
    <molecule>Isoform 2</molecule>
    <subcellularLocation>
        <location evidence="32">Cytoplasm</location>
        <location evidence="32">Perinuclear region</location>
    </subcellularLocation>
    <subcellularLocation>
        <location evidence="32">Golgi apparatus</location>
        <location evidence="32">trans-Golgi network</location>
    </subcellularLocation>
</comment>
<comment type="alternative products">
    <event type="alternative splicing"/>
    <isoform>
        <id>Q99828-1</id>
        <name>1</name>
        <sequence type="displayed"/>
    </isoform>
    <isoform>
        <id>Q99828-2</id>
        <name>2</name>
        <name>CIB1a</name>
        <sequence type="described" ref="VSP_053740"/>
    </isoform>
</comment>
<comment type="tissue specificity">
    <text evidence="4 8 32 34 36 37">Ubiquitously expressed. Expressed in the epidermis, hair follicles and keratinocytes (PubMed:30068544). Detected in platelets and in cell lines of megakaryocytic and erythrocytic lineages. Both isoform 1 and isoform 2 are detected in various cancer cell lines, with isoform 2 being the predominant form (at protein level).</text>
</comment>
<comment type="induction">
    <text>Up-regulated during breast cancer progression.</text>
</comment>
<comment type="domain">
    <text>The EF-hands may also bind magnesium ions in the presence of high Mg(2+) levels and low Ca(2+) levels.</text>
</comment>
<comment type="PTM">
    <text evidence="42">Phosphorylation of isoform 2 at Ser-118 by PRKD2 increases its ability to stimulate tumor angiogenesis.</text>
</comment>
<comment type="disease" evidence="34">
    <disease id="DI-05446">
        <name>Epidermodysplasia verruciformis 3</name>
        <acronym>EV3</acronym>
        <description>A form of epidermodysplasia verruciformis, a rare genodermatosis associated with a high risk of skin carcinoma that results from an abnormal susceptibility to infection by specific human papillomaviruses, including the oncogenic HPV5. Infection leads to the early development of disseminated flat wart-like and pityriasis versicolor-like skin lesions. Cutaneous Bowen's carcinomas in situ and invasive squamous cell carcinomas develop in about half of the patients, mainly on sun-exposed skin areas. EV3 inheritance is autosomal recessive.</description>
        <dbReference type="MIM" id="618267"/>
    </disease>
    <text>The disease is caused by variants affecting the gene represented in this entry.</text>
</comment>
<comment type="miscellaneous">
    <text evidence="41">The binding of either calcium or magnesium significantly increases the structural stability of the protein in comparison to apo-CIB (calcium- and magnesium-free form).</text>
</comment>
<keyword id="KW-0002">3D-structure</keyword>
<keyword id="KW-0025">Alternative splicing</keyword>
<keyword id="KW-0037">Angiogenesis</keyword>
<keyword id="KW-0053">Apoptosis</keyword>
<keyword id="KW-0106">Calcium</keyword>
<keyword id="KW-0130">Cell adhesion</keyword>
<keyword id="KW-0131">Cell cycle</keyword>
<keyword id="KW-0132">Cell division</keyword>
<keyword id="KW-1003">Cell membrane</keyword>
<keyword id="KW-0966">Cell projection</keyword>
<keyword id="KW-0963">Cytoplasm</keyword>
<keyword id="KW-0206">Cytoskeleton</keyword>
<keyword id="KW-0221">Differentiation</keyword>
<keyword id="KW-0333">Golgi apparatus</keyword>
<keyword id="KW-0449">Lipoprotein</keyword>
<keyword id="KW-0460">Magnesium</keyword>
<keyword id="KW-0472">Membrane</keyword>
<keyword id="KW-0479">Metal-binding</keyword>
<keyword id="KW-0519">Myristate</keyword>
<keyword id="KW-0539">Nucleus</keyword>
<keyword id="KW-0597">Phosphoprotein</keyword>
<keyword id="KW-1267">Proteomics identification</keyword>
<keyword id="KW-1185">Reference proteome</keyword>
<keyword id="KW-0677">Repeat</keyword>
<keyword id="KW-0744">Spermatogenesis</keyword>
<feature type="initiator methionine" description="Removed">
    <location>
        <position position="1"/>
    </location>
</feature>
<feature type="chain" id="PRO_0000073531" description="Calcium and integrin-binding protein 1">
    <location>
        <begin position="2"/>
        <end position="191"/>
    </location>
</feature>
<feature type="domain" description="EF-hand 1" evidence="2">
    <location>
        <begin position="103"/>
        <end position="138"/>
    </location>
</feature>
<feature type="domain" description="EF-hand 2" evidence="2">
    <location>
        <begin position="148"/>
        <end position="183"/>
    </location>
</feature>
<feature type="binding site" evidence="2">
    <location>
        <position position="116"/>
    </location>
    <ligand>
        <name>Ca(2+)</name>
        <dbReference type="ChEBI" id="CHEBI:29108"/>
        <label>1</label>
    </ligand>
</feature>
<feature type="binding site" evidence="2">
    <location>
        <position position="118"/>
    </location>
    <ligand>
        <name>Ca(2+)</name>
        <dbReference type="ChEBI" id="CHEBI:29108"/>
        <label>1</label>
    </ligand>
</feature>
<feature type="binding site" evidence="2">
    <location>
        <position position="120"/>
    </location>
    <ligand>
        <name>Ca(2+)</name>
        <dbReference type="ChEBI" id="CHEBI:29108"/>
        <label>1</label>
    </ligand>
</feature>
<feature type="binding site" evidence="2">
    <location>
        <position position="122"/>
    </location>
    <ligand>
        <name>Ca(2+)</name>
        <dbReference type="ChEBI" id="CHEBI:29108"/>
        <label>1</label>
    </ligand>
</feature>
<feature type="binding site" evidence="2">
    <location>
        <position position="127"/>
    </location>
    <ligand>
        <name>Ca(2+)</name>
        <dbReference type="ChEBI" id="CHEBI:29108"/>
        <label>1</label>
    </ligand>
</feature>
<feature type="binding site" evidence="2">
    <location>
        <position position="161"/>
    </location>
    <ligand>
        <name>Ca(2+)</name>
        <dbReference type="ChEBI" id="CHEBI:29108"/>
        <label>2</label>
    </ligand>
</feature>
<feature type="binding site" evidence="2">
    <location>
        <position position="163"/>
    </location>
    <ligand>
        <name>Ca(2+)</name>
        <dbReference type="ChEBI" id="CHEBI:29108"/>
        <label>2</label>
    </ligand>
</feature>
<feature type="binding site" evidence="2">
    <location>
        <position position="165"/>
    </location>
    <ligand>
        <name>Ca(2+)</name>
        <dbReference type="ChEBI" id="CHEBI:29108"/>
        <label>2</label>
    </ligand>
</feature>
<feature type="binding site" evidence="2">
    <location>
        <position position="167"/>
    </location>
    <ligand>
        <name>Ca(2+)</name>
        <dbReference type="ChEBI" id="CHEBI:29108"/>
        <label>2</label>
    </ligand>
</feature>
<feature type="binding site" evidence="2">
    <location>
        <position position="172"/>
    </location>
    <ligand>
        <name>Ca(2+)</name>
        <dbReference type="ChEBI" id="CHEBI:29108"/>
        <label>2</label>
    </ligand>
</feature>
<feature type="lipid moiety-binding region" description="N-myristoyl glycine" evidence="3">
    <location>
        <position position="2"/>
    </location>
</feature>
<feature type="splice variant" id="VSP_053740" description="In isoform 2." evidence="39">
    <original>L</original>
    <variation>LSVYVVLAPHLVDNEQQARSGNEHTGRPIAENTDSSPLSTR</variation>
    <location>
        <position position="29"/>
    </location>
</feature>
<feature type="sequence variant" id="VAR_019565" description="In dbSNP:rs3210935." evidence="5 37 38">
    <original>S</original>
    <variation>T</variation>
    <location>
        <position position="44"/>
    </location>
</feature>
<feature type="sequence variant" id="VAR_081784" description="In EV3; absence of CIB1 protein in homozygous patient cells." evidence="34">
    <location>
        <begin position="72"/>
        <end position="191"/>
    </location>
</feature>
<feature type="sequence variant" id="VAR_048636" description="In dbSNP:rs11551250.">
    <original>I</original>
    <variation>T</variation>
    <location>
        <position position="106"/>
    </location>
</feature>
<feature type="mutagenesis site" description="Inhibits translocation to the plasma membrane. Increased apoptosis after TNF stimulation." evidence="24">
    <original>G</original>
    <variation>A</variation>
    <location>
        <position position="2"/>
    </location>
</feature>
<feature type="mutagenesis site" description="Loss of phosphorylation by PKD/PRKD2; in isoform 2." evidence="32">
    <original>S</original>
    <variation>A</variation>
    <location>
        <position position="78"/>
    </location>
</feature>
<feature type="mutagenesis site" description="Phosphomimetic; promotes tumor growth by an indirect mechanism; in isoform 2." evidence="32">
    <original>S</original>
    <variation>E</variation>
    <location>
        <position position="78"/>
    </location>
</feature>
<feature type="mutagenesis site" description="Loss of binding to ITGAV." evidence="33">
    <original>IFDF</original>
    <variation>AAAA</variation>
    <location>
        <begin position="114"/>
        <end position="117"/>
    </location>
</feature>
<feature type="mutagenesis site" description="Loss of binding to ITGA2B." evidence="10">
    <original>F</original>
    <variation>A</variation>
    <location>
        <position position="115"/>
    </location>
</feature>
<feature type="mutagenesis site" description="Cytoplasmic localization." evidence="13">
    <original>D</original>
    <variation>N</variation>
    <location>
        <position position="127"/>
    </location>
</feature>
<feature type="mutagenesis site" description="Loss of binding to ITGA2B." evidence="10">
    <original>L</original>
    <variation>A</variation>
    <variation>T</variation>
    <location>
        <position position="131"/>
    </location>
</feature>
<feature type="mutagenesis site" description="Loss of binding to ITGA2B." evidence="33">
    <original>LI</original>
    <variation>AA</variation>
    <location>
        <begin position="152"/>
        <end position="153"/>
    </location>
</feature>
<feature type="mutagenesis site" description="Loss of binding to ITGA2B." evidence="10">
    <original>I</original>
    <variation>A</variation>
    <location>
        <position position="153"/>
    </location>
</feature>
<feature type="mutagenesis site" description="No effect on phosphorylation by PKD/PRKD2; in isoform 2." evidence="32">
    <original>T</original>
    <variation>A</variation>
    <location>
        <position position="167"/>
    </location>
</feature>
<feature type="mutagenesis site" description="Cytoplasmic localization." evidence="13">
    <original>E</original>
    <variation>Q</variation>
    <location>
        <position position="172"/>
    </location>
</feature>
<feature type="mutagenesis site" description="Loss of binding to ITGA2B." evidence="10 19 33">
    <original>F</original>
    <variation>A</variation>
    <location>
        <position position="173"/>
    </location>
</feature>
<feature type="mutagenesis site" description="Loss of binding to ITGA2B. Does not inhibit interaction with PAK1." evidence="10 19 33">
    <original>F</original>
    <variation>A</variation>
    <location>
        <position position="173"/>
    </location>
</feature>
<feature type="sequence conflict" description="In Ref. 6; CAG33236." evidence="40" ref="6">
    <original>T</original>
    <variation>M</variation>
    <location>
        <position position="136"/>
    </location>
</feature>
<feature type="sequence conflict" description="In Ref. 4; AEZ06077." evidence="40" ref="4">
    <original>S</original>
    <variation>F</variation>
    <location>
        <position position="171"/>
    </location>
</feature>
<feature type="helix" evidence="44">
    <location>
        <begin position="14"/>
        <end position="16"/>
    </location>
</feature>
<feature type="turn" evidence="46">
    <location>
        <begin position="18"/>
        <end position="20"/>
    </location>
</feature>
<feature type="helix" evidence="47">
    <location>
        <begin position="24"/>
        <end position="35"/>
    </location>
</feature>
<feature type="helix" evidence="47">
    <location>
        <begin position="40"/>
        <end position="42"/>
    </location>
</feature>
<feature type="helix" evidence="47">
    <location>
        <begin position="45"/>
        <end position="48"/>
    </location>
</feature>
<feature type="turn" evidence="43">
    <location>
        <begin position="49"/>
        <end position="51"/>
    </location>
</feature>
<feature type="helix" evidence="47">
    <location>
        <begin position="55"/>
        <end position="58"/>
    </location>
</feature>
<feature type="helix" evidence="47">
    <location>
        <begin position="62"/>
        <end position="65"/>
    </location>
</feature>
<feature type="helix" evidence="47">
    <location>
        <begin position="70"/>
        <end position="77"/>
    </location>
</feature>
<feature type="strand" evidence="45">
    <location>
        <begin position="81"/>
        <end position="86"/>
    </location>
</feature>
<feature type="helix" evidence="47">
    <location>
        <begin position="88"/>
        <end position="98"/>
    </location>
</feature>
<feature type="helix" evidence="47">
    <location>
        <begin position="104"/>
        <end position="115"/>
    </location>
</feature>
<feature type="strand" evidence="47">
    <location>
        <begin position="120"/>
        <end position="123"/>
    </location>
</feature>
<feature type="helix" evidence="47">
    <location>
        <begin position="125"/>
        <end position="136"/>
    </location>
</feature>
<feature type="strand" evidence="45">
    <location>
        <begin position="137"/>
        <end position="139"/>
    </location>
</feature>
<feature type="helix" evidence="47">
    <location>
        <begin position="146"/>
        <end position="160"/>
    </location>
</feature>
<feature type="strand" evidence="47">
    <location>
        <begin position="165"/>
        <end position="168"/>
    </location>
</feature>
<feature type="helix" evidence="47">
    <location>
        <begin position="170"/>
        <end position="178"/>
    </location>
</feature>
<feature type="helix" evidence="44">
    <location>
        <begin position="181"/>
        <end position="190"/>
    </location>
</feature>
<feature type="modified residue" description="Phosphoserine" evidence="32">
    <location sequence="Q99828-2">
        <position position="118"/>
    </location>
</feature>
<gene>
    <name type="primary">CIB1</name>
    <name type="synonym">CIB</name>
    <name type="synonym">KIP</name>
    <name type="synonym">PRKDCIP</name>
</gene>